<dbReference type="EMBL" id="AP008934">
    <property type="protein sequence ID" value="BAE18644.1"/>
    <property type="molecule type" value="Genomic_DNA"/>
</dbReference>
<dbReference type="RefSeq" id="WP_011303257.1">
    <property type="nucleotide sequence ID" value="NZ_MTGA01000034.1"/>
</dbReference>
<dbReference type="SMR" id="Q49X54"/>
<dbReference type="GeneID" id="3617241"/>
<dbReference type="KEGG" id="ssp:SSP1499"/>
<dbReference type="PATRIC" id="fig|342451.11.peg.1501"/>
<dbReference type="eggNOG" id="COG0532">
    <property type="taxonomic scope" value="Bacteria"/>
</dbReference>
<dbReference type="HOGENOM" id="CLU_006301_5_1_9"/>
<dbReference type="OrthoDB" id="9811804at2"/>
<dbReference type="Proteomes" id="UP000006371">
    <property type="component" value="Chromosome"/>
</dbReference>
<dbReference type="GO" id="GO:0005829">
    <property type="term" value="C:cytosol"/>
    <property type="evidence" value="ECO:0007669"/>
    <property type="project" value="TreeGrafter"/>
</dbReference>
<dbReference type="GO" id="GO:0005525">
    <property type="term" value="F:GTP binding"/>
    <property type="evidence" value="ECO:0007669"/>
    <property type="project" value="UniProtKB-KW"/>
</dbReference>
<dbReference type="GO" id="GO:0003924">
    <property type="term" value="F:GTPase activity"/>
    <property type="evidence" value="ECO:0007669"/>
    <property type="project" value="UniProtKB-UniRule"/>
</dbReference>
<dbReference type="GO" id="GO:0003743">
    <property type="term" value="F:translation initiation factor activity"/>
    <property type="evidence" value="ECO:0007669"/>
    <property type="project" value="UniProtKB-UniRule"/>
</dbReference>
<dbReference type="CDD" id="cd01887">
    <property type="entry name" value="IF2_eIF5B"/>
    <property type="match status" value="1"/>
</dbReference>
<dbReference type="CDD" id="cd03702">
    <property type="entry name" value="IF2_mtIF2_II"/>
    <property type="match status" value="1"/>
</dbReference>
<dbReference type="CDD" id="cd03692">
    <property type="entry name" value="mtIF2_IVc"/>
    <property type="match status" value="1"/>
</dbReference>
<dbReference type="FunFam" id="2.40.30.10:FF:000007">
    <property type="entry name" value="Translation initiation factor IF-2"/>
    <property type="match status" value="1"/>
</dbReference>
<dbReference type="FunFam" id="2.40.30.10:FF:000008">
    <property type="entry name" value="Translation initiation factor IF-2"/>
    <property type="match status" value="1"/>
</dbReference>
<dbReference type="FunFam" id="3.40.50.10050:FF:000001">
    <property type="entry name" value="Translation initiation factor IF-2"/>
    <property type="match status" value="1"/>
</dbReference>
<dbReference type="FunFam" id="3.40.50.300:FF:000019">
    <property type="entry name" value="Translation initiation factor IF-2"/>
    <property type="match status" value="1"/>
</dbReference>
<dbReference type="Gene3D" id="1.10.10.2480">
    <property type="match status" value="1"/>
</dbReference>
<dbReference type="Gene3D" id="3.40.50.300">
    <property type="entry name" value="P-loop containing nucleotide triphosphate hydrolases"/>
    <property type="match status" value="1"/>
</dbReference>
<dbReference type="Gene3D" id="2.40.30.10">
    <property type="entry name" value="Translation factors"/>
    <property type="match status" value="2"/>
</dbReference>
<dbReference type="Gene3D" id="3.40.50.10050">
    <property type="entry name" value="Translation initiation factor IF- 2, domain 3"/>
    <property type="match status" value="1"/>
</dbReference>
<dbReference type="HAMAP" id="MF_00100_B">
    <property type="entry name" value="IF_2_B"/>
    <property type="match status" value="1"/>
</dbReference>
<dbReference type="InterPro" id="IPR053905">
    <property type="entry name" value="EF-G-like_DII"/>
</dbReference>
<dbReference type="InterPro" id="IPR044145">
    <property type="entry name" value="IF2_II"/>
</dbReference>
<dbReference type="InterPro" id="IPR006847">
    <property type="entry name" value="IF2_N"/>
</dbReference>
<dbReference type="InterPro" id="IPR027417">
    <property type="entry name" value="P-loop_NTPase"/>
</dbReference>
<dbReference type="InterPro" id="IPR005225">
    <property type="entry name" value="Small_GTP-bd"/>
</dbReference>
<dbReference type="InterPro" id="IPR000795">
    <property type="entry name" value="T_Tr_GTP-bd_dom"/>
</dbReference>
<dbReference type="InterPro" id="IPR000178">
    <property type="entry name" value="TF_IF2_bacterial-like"/>
</dbReference>
<dbReference type="InterPro" id="IPR015760">
    <property type="entry name" value="TIF_IF2"/>
</dbReference>
<dbReference type="InterPro" id="IPR023115">
    <property type="entry name" value="TIF_IF2_dom3"/>
</dbReference>
<dbReference type="InterPro" id="IPR036925">
    <property type="entry name" value="TIF_IF2_dom3_sf"/>
</dbReference>
<dbReference type="InterPro" id="IPR009000">
    <property type="entry name" value="Transl_B-barrel_sf"/>
</dbReference>
<dbReference type="NCBIfam" id="TIGR00487">
    <property type="entry name" value="IF-2"/>
    <property type="match status" value="1"/>
</dbReference>
<dbReference type="NCBIfam" id="TIGR00231">
    <property type="entry name" value="small_GTP"/>
    <property type="match status" value="1"/>
</dbReference>
<dbReference type="PANTHER" id="PTHR43381:SF5">
    <property type="entry name" value="TR-TYPE G DOMAIN-CONTAINING PROTEIN"/>
    <property type="match status" value="1"/>
</dbReference>
<dbReference type="PANTHER" id="PTHR43381">
    <property type="entry name" value="TRANSLATION INITIATION FACTOR IF-2-RELATED"/>
    <property type="match status" value="1"/>
</dbReference>
<dbReference type="Pfam" id="PF22042">
    <property type="entry name" value="EF-G_D2"/>
    <property type="match status" value="1"/>
</dbReference>
<dbReference type="Pfam" id="PF00009">
    <property type="entry name" value="GTP_EFTU"/>
    <property type="match status" value="1"/>
</dbReference>
<dbReference type="Pfam" id="PF11987">
    <property type="entry name" value="IF-2"/>
    <property type="match status" value="1"/>
</dbReference>
<dbReference type="Pfam" id="PF04760">
    <property type="entry name" value="IF2_N"/>
    <property type="match status" value="2"/>
</dbReference>
<dbReference type="SUPFAM" id="SSF52156">
    <property type="entry name" value="Initiation factor IF2/eIF5b, domain 3"/>
    <property type="match status" value="1"/>
</dbReference>
<dbReference type="SUPFAM" id="SSF52540">
    <property type="entry name" value="P-loop containing nucleoside triphosphate hydrolases"/>
    <property type="match status" value="1"/>
</dbReference>
<dbReference type="SUPFAM" id="SSF50447">
    <property type="entry name" value="Translation proteins"/>
    <property type="match status" value="2"/>
</dbReference>
<dbReference type="PROSITE" id="PS51722">
    <property type="entry name" value="G_TR_2"/>
    <property type="match status" value="1"/>
</dbReference>
<dbReference type="PROSITE" id="PS01176">
    <property type="entry name" value="IF2"/>
    <property type="match status" value="1"/>
</dbReference>
<keyword id="KW-0963">Cytoplasm</keyword>
<keyword id="KW-0342">GTP-binding</keyword>
<keyword id="KW-0396">Initiation factor</keyword>
<keyword id="KW-0547">Nucleotide-binding</keyword>
<keyword id="KW-0648">Protein biosynthesis</keyword>
<keyword id="KW-1185">Reference proteome</keyword>
<organism>
    <name type="scientific">Staphylococcus saprophyticus subsp. saprophyticus (strain ATCC 15305 / DSM 20229 / NCIMB 8711 / NCTC 7292 / S-41)</name>
    <dbReference type="NCBI Taxonomy" id="342451"/>
    <lineage>
        <taxon>Bacteria</taxon>
        <taxon>Bacillati</taxon>
        <taxon>Bacillota</taxon>
        <taxon>Bacilli</taxon>
        <taxon>Bacillales</taxon>
        <taxon>Staphylococcaceae</taxon>
        <taxon>Staphylococcus</taxon>
    </lineage>
</organism>
<evidence type="ECO:0000250" key="1"/>
<evidence type="ECO:0000255" key="2">
    <source>
        <dbReference type="HAMAP-Rule" id="MF_00100"/>
    </source>
</evidence>
<evidence type="ECO:0000256" key="3">
    <source>
        <dbReference type="SAM" id="MobiDB-lite"/>
    </source>
</evidence>
<name>IF2_STAS1</name>
<sequence length="701" mass="77470">MSKKRIYEYAKDLKIKSKEIIHELKKMDVEVTSHMQTLEDDQIKALDKIYKPEKAEQSEKSQQKNTQNKQQTTHNKGNQSNKGNQNNKPNNKKNNKNNKNNKNNKNNKQPKQEEPKEMPSKITYQDGITVGELAEKLNVDSSGIIKKLFLLGIMANINQSLDDETLELIVDDYGVEIEKEIVVDEEDLAIYFDDETEDENAIERPAVVTIMGHVDHGKTTLLDSIRHTKVTAGEAGGITQHIGAYQIENDGKKITFLDTPGHAAFTTMRARGAQVTDITILVVAADDGVMPQTIEAINHAKEAEVPTIVAVNKIDKPTSNPDRVMQELTEYGLIPEDWGGDTIFVPLSALSGDGIEDLLEMIVLTSEVQELKANPEKNAVGTVIEAELDKSRGPSASLLVQNGTLNVGDSLVVGNTYGRIRAMVNDLGQRIKTAGPSTPVEITGINDVPQAGDRFVVFKDEKQARRIGEARHEANVMQQRQESKSVSLDNLFEQMKQGEMKDLNVIIKGDVQGSVEALAASLMKIDVEGVNVRIIHTAVGAINESDVTLANASNGIIIGFNVRPDTGAKRAADNEGVDMRLHRVIYNVIEEIESAMKGMLDPEFEEQVIGQAEVRQTFKVSKVGTIAGSYVIDGKITRNAGVRVIRDGIVQFEGELDTLKRFKDDAKEVAQGYECGITIEKYNDLKEGDIIEAFEMVEIKR</sequence>
<proteinExistence type="inferred from homology"/>
<feature type="chain" id="PRO_0000228247" description="Translation initiation factor IF-2">
    <location>
        <begin position="1"/>
        <end position="701"/>
    </location>
</feature>
<feature type="domain" description="tr-type G">
    <location>
        <begin position="203"/>
        <end position="372"/>
    </location>
</feature>
<feature type="region of interest" description="Disordered" evidence="3">
    <location>
        <begin position="48"/>
        <end position="123"/>
    </location>
</feature>
<feature type="region of interest" description="G1" evidence="1">
    <location>
        <begin position="212"/>
        <end position="219"/>
    </location>
</feature>
<feature type="region of interest" description="G2" evidence="1">
    <location>
        <begin position="237"/>
        <end position="241"/>
    </location>
</feature>
<feature type="region of interest" description="G3" evidence="1">
    <location>
        <begin position="258"/>
        <end position="261"/>
    </location>
</feature>
<feature type="region of interest" description="G4" evidence="1">
    <location>
        <begin position="312"/>
        <end position="315"/>
    </location>
</feature>
<feature type="region of interest" description="G5" evidence="1">
    <location>
        <begin position="348"/>
        <end position="350"/>
    </location>
</feature>
<feature type="compositionally biased region" description="Basic and acidic residues" evidence="3">
    <location>
        <begin position="48"/>
        <end position="62"/>
    </location>
</feature>
<feature type="compositionally biased region" description="Low complexity" evidence="3">
    <location>
        <begin position="63"/>
        <end position="89"/>
    </location>
</feature>
<feature type="compositionally biased region" description="Low complexity" evidence="3">
    <location>
        <begin position="97"/>
        <end position="109"/>
    </location>
</feature>
<feature type="compositionally biased region" description="Basic and acidic residues" evidence="3">
    <location>
        <begin position="110"/>
        <end position="119"/>
    </location>
</feature>
<feature type="binding site" evidence="2">
    <location>
        <begin position="212"/>
        <end position="219"/>
    </location>
    <ligand>
        <name>GTP</name>
        <dbReference type="ChEBI" id="CHEBI:37565"/>
    </ligand>
</feature>
<feature type="binding site" evidence="2">
    <location>
        <begin position="258"/>
        <end position="262"/>
    </location>
    <ligand>
        <name>GTP</name>
        <dbReference type="ChEBI" id="CHEBI:37565"/>
    </ligand>
</feature>
<feature type="binding site" evidence="2">
    <location>
        <begin position="312"/>
        <end position="315"/>
    </location>
    <ligand>
        <name>GTP</name>
        <dbReference type="ChEBI" id="CHEBI:37565"/>
    </ligand>
</feature>
<accession>Q49X54</accession>
<gene>
    <name evidence="2" type="primary">infB</name>
    <name type="ordered locus">SSP1499</name>
</gene>
<protein>
    <recommendedName>
        <fullName evidence="2">Translation initiation factor IF-2</fullName>
    </recommendedName>
</protein>
<comment type="function">
    <text evidence="2">One of the essential components for the initiation of protein synthesis. Protects formylmethionyl-tRNA from spontaneous hydrolysis and promotes its binding to the 30S ribosomal subunits. Also involved in the hydrolysis of GTP during the formation of the 70S ribosomal complex.</text>
</comment>
<comment type="subcellular location">
    <subcellularLocation>
        <location evidence="2">Cytoplasm</location>
    </subcellularLocation>
</comment>
<comment type="similarity">
    <text evidence="2">Belongs to the TRAFAC class translation factor GTPase superfamily. Classic translation factor GTPase family. IF-2 subfamily.</text>
</comment>
<reference key="1">
    <citation type="journal article" date="2005" name="Proc. Natl. Acad. Sci. U.S.A.">
        <title>Whole genome sequence of Staphylococcus saprophyticus reveals the pathogenesis of uncomplicated urinary tract infection.</title>
        <authorList>
            <person name="Kuroda M."/>
            <person name="Yamashita A."/>
            <person name="Hirakawa H."/>
            <person name="Kumano M."/>
            <person name="Morikawa K."/>
            <person name="Higashide M."/>
            <person name="Maruyama A."/>
            <person name="Inose Y."/>
            <person name="Matoba K."/>
            <person name="Toh H."/>
            <person name="Kuhara S."/>
            <person name="Hattori M."/>
            <person name="Ohta T."/>
        </authorList>
    </citation>
    <scope>NUCLEOTIDE SEQUENCE [LARGE SCALE GENOMIC DNA]</scope>
    <source>
        <strain>ATCC 15305 / DSM 20229 / NCIMB 8711 / NCTC 7292 / S-41</strain>
    </source>
</reference>